<sequence>MKVKVGINGYGTIGKRVGYAVSKQADMELVGVAKTKPDFEAYRAKELGIPVYAASPDFVPRFEKVGFEIVGTLEDLLEKVDVIVDATPGGMGEKNKALYEKAGVKAIFQGGEKASVAEVSFVAQANYEKALGKDYVRVVSCNTTGLTRTLNAIKDYIDYVYAVMIRRAADPNDIKRGPVNAIKPSVEVPSHHGPDVQTVIPINIETMAFIVPTTLMHVHSVMVELKKPLTREDVIKIFENTTRVLLFEKERGFDSTAQLIEFARDLHREWNNLYEIGVWKESISVKGNRLFYIQAVHQESDVVPENIDAIRAMFELADKWESIKKTNKSLGILK</sequence>
<feature type="chain" id="PRO_1000212041" description="Glyceraldehyde-3-phosphate dehydrogenase">
    <location>
        <begin position="1"/>
        <end position="334"/>
    </location>
</feature>
<feature type="active site" description="Nucleophile" evidence="1">
    <location>
        <position position="141"/>
    </location>
</feature>
<feature type="binding site" evidence="1">
    <location>
        <begin position="12"/>
        <end position="13"/>
    </location>
    <ligand>
        <name>NAD(+)</name>
        <dbReference type="ChEBI" id="CHEBI:57540"/>
    </ligand>
</feature>
<feature type="binding site" evidence="1">
    <location>
        <position position="111"/>
    </location>
    <ligand>
        <name>NAD(+)</name>
        <dbReference type="ChEBI" id="CHEBI:57540"/>
    </ligand>
</feature>
<feature type="binding site" evidence="1">
    <location>
        <begin position="140"/>
        <end position="142"/>
    </location>
    <ligand>
        <name>D-glyceraldehyde 3-phosphate</name>
        <dbReference type="ChEBI" id="CHEBI:59776"/>
    </ligand>
</feature>
<feature type="binding site" evidence="1">
    <location>
        <position position="167"/>
    </location>
    <ligand>
        <name>NAD(+)</name>
        <dbReference type="ChEBI" id="CHEBI:57540"/>
    </ligand>
</feature>
<feature type="binding site" evidence="1">
    <location>
        <begin position="192"/>
        <end position="193"/>
    </location>
    <ligand>
        <name>D-glyceraldehyde 3-phosphate</name>
        <dbReference type="ChEBI" id="CHEBI:59776"/>
    </ligand>
</feature>
<feature type="binding site" evidence="1">
    <location>
        <position position="298"/>
    </location>
    <ligand>
        <name>NAD(+)</name>
        <dbReference type="ChEBI" id="CHEBI:57540"/>
    </ligand>
</feature>
<gene>
    <name evidence="1" type="primary">gap</name>
    <name type="ordered locus">TSIB_0949</name>
</gene>
<name>G3P_THESM</name>
<evidence type="ECO:0000255" key="1">
    <source>
        <dbReference type="HAMAP-Rule" id="MF_00559"/>
    </source>
</evidence>
<accession>C6A312</accession>
<proteinExistence type="inferred from homology"/>
<comment type="catalytic activity">
    <reaction evidence="1">
        <text>D-glyceraldehyde 3-phosphate + phosphate + NADP(+) = (2R)-3-phospho-glyceroyl phosphate + NADPH + H(+)</text>
        <dbReference type="Rhea" id="RHEA:10296"/>
        <dbReference type="ChEBI" id="CHEBI:15378"/>
        <dbReference type="ChEBI" id="CHEBI:43474"/>
        <dbReference type="ChEBI" id="CHEBI:57604"/>
        <dbReference type="ChEBI" id="CHEBI:57783"/>
        <dbReference type="ChEBI" id="CHEBI:58349"/>
        <dbReference type="ChEBI" id="CHEBI:59776"/>
        <dbReference type="EC" id="1.2.1.59"/>
    </reaction>
</comment>
<comment type="catalytic activity">
    <reaction evidence="1">
        <text>D-glyceraldehyde 3-phosphate + phosphate + NAD(+) = (2R)-3-phospho-glyceroyl phosphate + NADH + H(+)</text>
        <dbReference type="Rhea" id="RHEA:10300"/>
        <dbReference type="ChEBI" id="CHEBI:15378"/>
        <dbReference type="ChEBI" id="CHEBI:43474"/>
        <dbReference type="ChEBI" id="CHEBI:57540"/>
        <dbReference type="ChEBI" id="CHEBI:57604"/>
        <dbReference type="ChEBI" id="CHEBI:57945"/>
        <dbReference type="ChEBI" id="CHEBI:59776"/>
        <dbReference type="EC" id="1.2.1.59"/>
    </reaction>
</comment>
<comment type="pathway">
    <text evidence="1">Carbohydrate degradation; glycolysis; pyruvate from D-glyceraldehyde 3-phosphate: step 1/5.</text>
</comment>
<comment type="subunit">
    <text evidence="1">Homotetramer.</text>
</comment>
<comment type="subcellular location">
    <subcellularLocation>
        <location evidence="1">Cytoplasm</location>
    </subcellularLocation>
</comment>
<comment type="similarity">
    <text evidence="1">Belongs to the glyceraldehyde-3-phosphate dehydrogenase family.</text>
</comment>
<reference key="1">
    <citation type="journal article" date="2009" name="Appl. Environ. Microbiol.">
        <title>Metabolic versatility and indigenous origin of the archaeon Thermococcus sibiricus, isolated from a siberian oil reservoir, as revealed by genome analysis.</title>
        <authorList>
            <person name="Mardanov A.V."/>
            <person name="Ravin N.V."/>
            <person name="Svetlitchnyi V.A."/>
            <person name="Beletsky A.V."/>
            <person name="Miroshnichenko M.L."/>
            <person name="Bonch-Osmolovskaya E.A."/>
            <person name="Skryabin K.G."/>
        </authorList>
    </citation>
    <scope>NUCLEOTIDE SEQUENCE [LARGE SCALE GENOMIC DNA]</scope>
    <source>
        <strain>DSM 12597 / MM 739</strain>
    </source>
</reference>
<organism>
    <name type="scientific">Thermococcus sibiricus (strain DSM 12597 / MM 739)</name>
    <dbReference type="NCBI Taxonomy" id="604354"/>
    <lineage>
        <taxon>Archaea</taxon>
        <taxon>Methanobacteriati</taxon>
        <taxon>Methanobacteriota</taxon>
        <taxon>Thermococci</taxon>
        <taxon>Thermococcales</taxon>
        <taxon>Thermococcaceae</taxon>
        <taxon>Thermococcus</taxon>
    </lineage>
</organism>
<keyword id="KW-0963">Cytoplasm</keyword>
<keyword id="KW-0324">Glycolysis</keyword>
<keyword id="KW-0520">NAD</keyword>
<keyword id="KW-0521">NADP</keyword>
<keyword id="KW-0560">Oxidoreductase</keyword>
<keyword id="KW-1185">Reference proteome</keyword>
<protein>
    <recommendedName>
        <fullName evidence="1">Glyceraldehyde-3-phosphate dehydrogenase</fullName>
        <shortName evidence="1">GAPDH</shortName>
        <ecNumber evidence="1">1.2.1.59</ecNumber>
    </recommendedName>
    <alternativeName>
        <fullName evidence="1">NAD(P)-dependent glyceraldehyde-3-phosphate dehydrogenase</fullName>
    </alternativeName>
</protein>
<dbReference type="EC" id="1.2.1.59" evidence="1"/>
<dbReference type="EMBL" id="CP001463">
    <property type="protein sequence ID" value="ACS90007.1"/>
    <property type="molecule type" value="Genomic_DNA"/>
</dbReference>
<dbReference type="RefSeq" id="WP_015849226.1">
    <property type="nucleotide sequence ID" value="NC_012883.1"/>
</dbReference>
<dbReference type="SMR" id="C6A312"/>
<dbReference type="STRING" id="604354.TSIB_0949"/>
<dbReference type="GeneID" id="8095943"/>
<dbReference type="KEGG" id="tsi:TSIB_0949"/>
<dbReference type="eggNOG" id="arCOG00493">
    <property type="taxonomic scope" value="Archaea"/>
</dbReference>
<dbReference type="HOGENOM" id="CLU_069533_0_0_2"/>
<dbReference type="OrthoDB" id="295712at2157"/>
<dbReference type="UniPathway" id="UPA00109">
    <property type="reaction ID" value="UER00184"/>
</dbReference>
<dbReference type="Proteomes" id="UP000009079">
    <property type="component" value="Chromosome"/>
</dbReference>
<dbReference type="GO" id="GO:0005737">
    <property type="term" value="C:cytoplasm"/>
    <property type="evidence" value="ECO:0007669"/>
    <property type="project" value="UniProtKB-SubCell"/>
</dbReference>
<dbReference type="GO" id="GO:0008839">
    <property type="term" value="F:4-hydroxy-tetrahydrodipicolinate reductase"/>
    <property type="evidence" value="ECO:0007669"/>
    <property type="project" value="InterPro"/>
</dbReference>
<dbReference type="GO" id="GO:0004365">
    <property type="term" value="F:glyceraldehyde-3-phosphate dehydrogenase (NAD+) (phosphorylating) activity"/>
    <property type="evidence" value="ECO:0007669"/>
    <property type="project" value="UniProtKB-UniRule"/>
</dbReference>
<dbReference type="GO" id="GO:0047100">
    <property type="term" value="F:glyceraldehyde-3-phosphate dehydrogenase (NADP+) (phosphorylating) activity"/>
    <property type="evidence" value="ECO:0007669"/>
    <property type="project" value="RHEA"/>
</dbReference>
<dbReference type="GO" id="GO:0051287">
    <property type="term" value="F:NAD binding"/>
    <property type="evidence" value="ECO:0007669"/>
    <property type="project" value="InterPro"/>
</dbReference>
<dbReference type="GO" id="GO:0050661">
    <property type="term" value="F:NADP binding"/>
    <property type="evidence" value="ECO:0007669"/>
    <property type="project" value="InterPro"/>
</dbReference>
<dbReference type="GO" id="GO:0006096">
    <property type="term" value="P:glycolytic process"/>
    <property type="evidence" value="ECO:0007669"/>
    <property type="project" value="UniProtKB-UniRule"/>
</dbReference>
<dbReference type="GO" id="GO:0009089">
    <property type="term" value="P:lysine biosynthetic process via diaminopimelate"/>
    <property type="evidence" value="ECO:0007669"/>
    <property type="project" value="InterPro"/>
</dbReference>
<dbReference type="CDD" id="cd18127">
    <property type="entry name" value="GAPDH_II_C"/>
    <property type="match status" value="1"/>
</dbReference>
<dbReference type="CDD" id="cd02278">
    <property type="entry name" value="GAPDH_II_N"/>
    <property type="match status" value="1"/>
</dbReference>
<dbReference type="Gene3D" id="3.30.360.10">
    <property type="entry name" value="Dihydrodipicolinate Reductase, domain 2"/>
    <property type="match status" value="1"/>
</dbReference>
<dbReference type="Gene3D" id="3.40.50.720">
    <property type="entry name" value="NAD(P)-binding Rossmann-like Domain"/>
    <property type="match status" value="1"/>
</dbReference>
<dbReference type="HAMAP" id="MF_00559">
    <property type="entry name" value="G3P_dehdrog_arch"/>
    <property type="match status" value="1"/>
</dbReference>
<dbReference type="InterPro" id="IPR000846">
    <property type="entry name" value="DapB_N"/>
</dbReference>
<dbReference type="InterPro" id="IPR020831">
    <property type="entry name" value="GlycerAld/Erythrose_P_DH"/>
</dbReference>
<dbReference type="InterPro" id="IPR020830">
    <property type="entry name" value="GlycerAld_3-P_DH_AS"/>
</dbReference>
<dbReference type="InterPro" id="IPR020829">
    <property type="entry name" value="GlycerAld_3-P_DH_cat"/>
</dbReference>
<dbReference type="InterPro" id="IPR020828">
    <property type="entry name" value="GlycerAld_3-P_DH_NAD(P)-bd"/>
</dbReference>
<dbReference type="InterPro" id="IPR006436">
    <property type="entry name" value="Glyceraldehyde-3-P_DH_2_arc"/>
</dbReference>
<dbReference type="InterPro" id="IPR036291">
    <property type="entry name" value="NAD(P)-bd_dom_sf"/>
</dbReference>
<dbReference type="NCBIfam" id="TIGR01546">
    <property type="entry name" value="GAPDH-II_archae"/>
    <property type="match status" value="1"/>
</dbReference>
<dbReference type="NCBIfam" id="NF003251">
    <property type="entry name" value="PRK04207.1"/>
    <property type="match status" value="1"/>
</dbReference>
<dbReference type="Pfam" id="PF01113">
    <property type="entry name" value="DapB_N"/>
    <property type="match status" value="1"/>
</dbReference>
<dbReference type="Pfam" id="PF02800">
    <property type="entry name" value="Gp_dh_C"/>
    <property type="match status" value="1"/>
</dbReference>
<dbReference type="PIRSF" id="PIRSF000149">
    <property type="entry name" value="GAP_DH"/>
    <property type="match status" value="1"/>
</dbReference>
<dbReference type="SMART" id="SM00846">
    <property type="entry name" value="Gp_dh_N"/>
    <property type="match status" value="1"/>
</dbReference>
<dbReference type="SUPFAM" id="SSF55347">
    <property type="entry name" value="Glyceraldehyde-3-phosphate dehydrogenase-like, C-terminal domain"/>
    <property type="match status" value="1"/>
</dbReference>
<dbReference type="SUPFAM" id="SSF51735">
    <property type="entry name" value="NAD(P)-binding Rossmann-fold domains"/>
    <property type="match status" value="1"/>
</dbReference>
<dbReference type="PROSITE" id="PS00071">
    <property type="entry name" value="GAPDH"/>
    <property type="match status" value="1"/>
</dbReference>